<feature type="chain" id="PRO_1000023082" description="UDP-N-acetylglucosamine 1-carboxyvinyltransferase">
    <location>
        <begin position="1"/>
        <end position="430"/>
    </location>
</feature>
<feature type="active site" description="Proton donor" evidence="1">
    <location>
        <position position="126"/>
    </location>
</feature>
<feature type="binding site" evidence="1">
    <location>
        <begin position="22"/>
        <end position="23"/>
    </location>
    <ligand>
        <name>phosphoenolpyruvate</name>
        <dbReference type="ChEBI" id="CHEBI:58702"/>
    </ligand>
</feature>
<feature type="binding site" evidence="1">
    <location>
        <position position="102"/>
    </location>
    <ligand>
        <name>UDP-N-acetyl-alpha-D-glucosamine</name>
        <dbReference type="ChEBI" id="CHEBI:57705"/>
    </ligand>
</feature>
<feature type="binding site" evidence="1">
    <location>
        <begin position="131"/>
        <end position="135"/>
    </location>
    <ligand>
        <name>UDP-N-acetyl-alpha-D-glucosamine</name>
        <dbReference type="ChEBI" id="CHEBI:57705"/>
    </ligand>
</feature>
<feature type="binding site" evidence="1">
    <location>
        <begin position="172"/>
        <end position="175"/>
    </location>
    <ligand>
        <name>UDP-N-acetyl-alpha-D-glucosamine</name>
        <dbReference type="ChEBI" id="CHEBI:57705"/>
    </ligand>
</feature>
<feature type="binding site" evidence="1">
    <location>
        <position position="317"/>
    </location>
    <ligand>
        <name>UDP-N-acetyl-alpha-D-glucosamine</name>
        <dbReference type="ChEBI" id="CHEBI:57705"/>
    </ligand>
</feature>
<feature type="binding site" evidence="1">
    <location>
        <position position="339"/>
    </location>
    <ligand>
        <name>UDP-N-acetyl-alpha-D-glucosamine</name>
        <dbReference type="ChEBI" id="CHEBI:57705"/>
    </ligand>
</feature>
<feature type="modified residue" description="2-(S-cysteinyl)pyruvic acid O-phosphothioketal" evidence="1">
    <location>
        <position position="126"/>
    </location>
</feature>
<dbReference type="EC" id="2.5.1.7" evidence="1"/>
<dbReference type="EMBL" id="AM236080">
    <property type="protein sequence ID" value="CAK06105.1"/>
    <property type="molecule type" value="Genomic_DNA"/>
</dbReference>
<dbReference type="RefSeq" id="WP_011650394.1">
    <property type="nucleotide sequence ID" value="NC_008380.1"/>
</dbReference>
<dbReference type="SMR" id="Q1MLP8"/>
<dbReference type="EnsemblBacteria" id="CAK06105">
    <property type="protein sequence ID" value="CAK06105"/>
    <property type="gene ID" value="RL0611"/>
</dbReference>
<dbReference type="KEGG" id="rle:RL0611"/>
<dbReference type="eggNOG" id="COG0766">
    <property type="taxonomic scope" value="Bacteria"/>
</dbReference>
<dbReference type="HOGENOM" id="CLU_027387_0_0_5"/>
<dbReference type="UniPathway" id="UPA00219"/>
<dbReference type="Proteomes" id="UP000006575">
    <property type="component" value="Chromosome"/>
</dbReference>
<dbReference type="GO" id="GO:0005737">
    <property type="term" value="C:cytoplasm"/>
    <property type="evidence" value="ECO:0007669"/>
    <property type="project" value="UniProtKB-SubCell"/>
</dbReference>
<dbReference type="GO" id="GO:0008760">
    <property type="term" value="F:UDP-N-acetylglucosamine 1-carboxyvinyltransferase activity"/>
    <property type="evidence" value="ECO:0007669"/>
    <property type="project" value="UniProtKB-UniRule"/>
</dbReference>
<dbReference type="GO" id="GO:0051301">
    <property type="term" value="P:cell division"/>
    <property type="evidence" value="ECO:0007669"/>
    <property type="project" value="UniProtKB-KW"/>
</dbReference>
<dbReference type="GO" id="GO:0071555">
    <property type="term" value="P:cell wall organization"/>
    <property type="evidence" value="ECO:0007669"/>
    <property type="project" value="UniProtKB-KW"/>
</dbReference>
<dbReference type="GO" id="GO:0009252">
    <property type="term" value="P:peptidoglycan biosynthetic process"/>
    <property type="evidence" value="ECO:0007669"/>
    <property type="project" value="UniProtKB-UniRule"/>
</dbReference>
<dbReference type="GO" id="GO:0008360">
    <property type="term" value="P:regulation of cell shape"/>
    <property type="evidence" value="ECO:0007669"/>
    <property type="project" value="UniProtKB-KW"/>
</dbReference>
<dbReference type="GO" id="GO:0019277">
    <property type="term" value="P:UDP-N-acetylgalactosamine biosynthetic process"/>
    <property type="evidence" value="ECO:0007669"/>
    <property type="project" value="InterPro"/>
</dbReference>
<dbReference type="CDD" id="cd01555">
    <property type="entry name" value="UdpNAET"/>
    <property type="match status" value="1"/>
</dbReference>
<dbReference type="FunFam" id="3.65.10.10:FF:000001">
    <property type="entry name" value="UDP-N-acetylglucosamine 1-carboxyvinyltransferase"/>
    <property type="match status" value="1"/>
</dbReference>
<dbReference type="Gene3D" id="3.65.10.10">
    <property type="entry name" value="Enolpyruvate transferase domain"/>
    <property type="match status" value="2"/>
</dbReference>
<dbReference type="HAMAP" id="MF_00111">
    <property type="entry name" value="MurA"/>
    <property type="match status" value="1"/>
</dbReference>
<dbReference type="InterPro" id="IPR001986">
    <property type="entry name" value="Enolpyruvate_Tfrase_dom"/>
</dbReference>
<dbReference type="InterPro" id="IPR036968">
    <property type="entry name" value="Enolpyruvate_Tfrase_sf"/>
</dbReference>
<dbReference type="InterPro" id="IPR050068">
    <property type="entry name" value="MurA_subfamily"/>
</dbReference>
<dbReference type="InterPro" id="IPR013792">
    <property type="entry name" value="RNA3'P_cycl/enolpyr_Trfase_a/b"/>
</dbReference>
<dbReference type="InterPro" id="IPR005750">
    <property type="entry name" value="UDP_GlcNAc_COvinyl_MurA"/>
</dbReference>
<dbReference type="NCBIfam" id="TIGR01072">
    <property type="entry name" value="murA"/>
    <property type="match status" value="1"/>
</dbReference>
<dbReference type="NCBIfam" id="NF006873">
    <property type="entry name" value="PRK09369.1"/>
    <property type="match status" value="1"/>
</dbReference>
<dbReference type="PANTHER" id="PTHR43783">
    <property type="entry name" value="UDP-N-ACETYLGLUCOSAMINE 1-CARBOXYVINYLTRANSFERASE"/>
    <property type="match status" value="1"/>
</dbReference>
<dbReference type="PANTHER" id="PTHR43783:SF1">
    <property type="entry name" value="UDP-N-ACETYLGLUCOSAMINE 1-CARBOXYVINYLTRANSFERASE"/>
    <property type="match status" value="1"/>
</dbReference>
<dbReference type="Pfam" id="PF00275">
    <property type="entry name" value="EPSP_synthase"/>
    <property type="match status" value="1"/>
</dbReference>
<dbReference type="SUPFAM" id="SSF55205">
    <property type="entry name" value="EPT/RTPC-like"/>
    <property type="match status" value="1"/>
</dbReference>
<name>MURA_RHIJ3</name>
<keyword id="KW-0131">Cell cycle</keyword>
<keyword id="KW-0132">Cell division</keyword>
<keyword id="KW-0133">Cell shape</keyword>
<keyword id="KW-0961">Cell wall biogenesis/degradation</keyword>
<keyword id="KW-0963">Cytoplasm</keyword>
<keyword id="KW-0573">Peptidoglycan synthesis</keyword>
<keyword id="KW-0670">Pyruvate</keyword>
<keyword id="KW-0808">Transferase</keyword>
<sequence length="430" mass="45746">MDRIRIVGGNELNGIIPISGAKNAALPLMIASLLTSDTLTLENVPHLADVELLMRILGNHGVDVAVNGRRERQEDSYSRTIHFTCRTIVDTTASYELVSKMRASFWVIGPLLAREGHCRVSLPGGCAIGTRPVDLFIEGLTALGATMEIDAGYINAKAPAGGLIGARYTFPKVSVGATHVMMMAATLARGTTVIGNAAREPEVVDLANCLNAMGAKITGAGTATITIEGVTSLSGARHRVLPDRIETGTYAMAVAMAGGDVVLENTDVALLETAVETLRRAGAEISSTNNGMRIKRNGAGIRPVDIVTDPFPGFPTDLQAQFMALMTRSSGVSHVTETIFENRFMHVQELARLGARISLSGQTAKIEGVQRLRGAPVMATDLRASVSLVIAGLAAEGETTVSRVYHLDRGFERLEEKLTRCGAIVERISE</sequence>
<proteinExistence type="inferred from homology"/>
<reference key="1">
    <citation type="journal article" date="2006" name="Genome Biol.">
        <title>The genome of Rhizobium leguminosarum has recognizable core and accessory components.</title>
        <authorList>
            <person name="Young J.P.W."/>
            <person name="Crossman L.C."/>
            <person name="Johnston A.W.B."/>
            <person name="Thomson N.R."/>
            <person name="Ghazoui Z.F."/>
            <person name="Hull K.H."/>
            <person name="Wexler M."/>
            <person name="Curson A.R.J."/>
            <person name="Todd J.D."/>
            <person name="Poole P.S."/>
            <person name="Mauchline T.H."/>
            <person name="East A.K."/>
            <person name="Quail M.A."/>
            <person name="Churcher C."/>
            <person name="Arrowsmith C."/>
            <person name="Cherevach I."/>
            <person name="Chillingworth T."/>
            <person name="Clarke K."/>
            <person name="Cronin A."/>
            <person name="Davis P."/>
            <person name="Fraser A."/>
            <person name="Hance Z."/>
            <person name="Hauser H."/>
            <person name="Jagels K."/>
            <person name="Moule S."/>
            <person name="Mungall K."/>
            <person name="Norbertczak H."/>
            <person name="Rabbinowitsch E."/>
            <person name="Sanders M."/>
            <person name="Simmonds M."/>
            <person name="Whitehead S."/>
            <person name="Parkhill J."/>
        </authorList>
    </citation>
    <scope>NUCLEOTIDE SEQUENCE [LARGE SCALE GENOMIC DNA]</scope>
    <source>
        <strain>DSM 114642 / LMG 32736 / 3841</strain>
    </source>
</reference>
<organism>
    <name type="scientific">Rhizobium johnstonii (strain DSM 114642 / LMG 32736 / 3841)</name>
    <name type="common">Rhizobium leguminosarum bv. viciae</name>
    <dbReference type="NCBI Taxonomy" id="216596"/>
    <lineage>
        <taxon>Bacteria</taxon>
        <taxon>Pseudomonadati</taxon>
        <taxon>Pseudomonadota</taxon>
        <taxon>Alphaproteobacteria</taxon>
        <taxon>Hyphomicrobiales</taxon>
        <taxon>Rhizobiaceae</taxon>
        <taxon>Rhizobium/Agrobacterium group</taxon>
        <taxon>Rhizobium</taxon>
        <taxon>Rhizobium johnstonii</taxon>
    </lineage>
</organism>
<comment type="function">
    <text evidence="1">Cell wall formation. Adds enolpyruvyl to UDP-N-acetylglucosamine.</text>
</comment>
<comment type="catalytic activity">
    <reaction evidence="1">
        <text>phosphoenolpyruvate + UDP-N-acetyl-alpha-D-glucosamine = UDP-N-acetyl-3-O-(1-carboxyvinyl)-alpha-D-glucosamine + phosphate</text>
        <dbReference type="Rhea" id="RHEA:18681"/>
        <dbReference type="ChEBI" id="CHEBI:43474"/>
        <dbReference type="ChEBI" id="CHEBI:57705"/>
        <dbReference type="ChEBI" id="CHEBI:58702"/>
        <dbReference type="ChEBI" id="CHEBI:68483"/>
        <dbReference type="EC" id="2.5.1.7"/>
    </reaction>
</comment>
<comment type="pathway">
    <text evidence="1">Cell wall biogenesis; peptidoglycan biosynthesis.</text>
</comment>
<comment type="subcellular location">
    <subcellularLocation>
        <location evidence="1">Cytoplasm</location>
    </subcellularLocation>
</comment>
<comment type="similarity">
    <text evidence="1">Belongs to the EPSP synthase family. MurA subfamily.</text>
</comment>
<protein>
    <recommendedName>
        <fullName evidence="1">UDP-N-acetylglucosamine 1-carboxyvinyltransferase</fullName>
        <ecNumber evidence="1">2.5.1.7</ecNumber>
    </recommendedName>
    <alternativeName>
        <fullName evidence="1">Enoylpyruvate transferase</fullName>
    </alternativeName>
    <alternativeName>
        <fullName evidence="1">UDP-N-acetylglucosamine enolpyruvyl transferase</fullName>
        <shortName evidence="1">EPT</shortName>
    </alternativeName>
</protein>
<gene>
    <name evidence="1" type="primary">murA</name>
    <name type="ordered locus">RL0611</name>
</gene>
<accession>Q1MLP8</accession>
<evidence type="ECO:0000255" key="1">
    <source>
        <dbReference type="HAMAP-Rule" id="MF_00111"/>
    </source>
</evidence>